<geneLocation type="cyanelle"/>
<sequence>MTVAIGRSDSERGWFDVLDDWLKRDRFVFLGWSGLLLLPCAYLAVGAWFTGTTFVTSWYTHGLASSYLEGCNFLTAAVSTPANSMGHSILFVWGPEAQGDFTRWCQIGGLWTFTALHGALGLIGFTLRQFEIARLIGLRPYNAIAFSGPIAVFVSVFLLYPLGQAGWFFAPSFGVAAIFRFLLFFQGFHNWTLNPFHMMGVAGVLGAALLCAIHGATVENTLFEDGDGSNTFPAFNPTQAEETYSMVTANRFWSQIFGVAFSNKRWLHFFMLFVPVTGLWMSAIGVVGLGVNLRAYDFVSQEIRAAEDPEFETFYTKNLLLNEGIRAWMAVQDQPHENFVFSEEVLPRGNAL</sequence>
<feature type="chain" id="PRO_0000090502" description="Photosystem II D2 protein">
    <location>
        <begin position="1"/>
        <end position="352"/>
    </location>
</feature>
<feature type="transmembrane region" description="Helical" evidence="1">
    <location>
        <begin position="40"/>
        <end position="60"/>
    </location>
</feature>
<feature type="transmembrane region" description="Helical" evidence="1">
    <location>
        <begin position="124"/>
        <end position="140"/>
    </location>
</feature>
<feature type="transmembrane region" description="Helical" evidence="1">
    <location>
        <begin position="152"/>
        <end position="165"/>
    </location>
</feature>
<feature type="transmembrane region" description="Helical" evidence="1">
    <location>
        <begin position="207"/>
        <end position="227"/>
    </location>
</feature>
<feature type="transmembrane region" description="Helical" evidence="1">
    <location>
        <begin position="278"/>
        <end position="294"/>
    </location>
</feature>
<feature type="binding site" description="axial binding residue" evidence="1">
    <location>
        <position position="117"/>
    </location>
    <ligand>
        <name>chlorophyll a</name>
        <dbReference type="ChEBI" id="CHEBI:58416"/>
        <label>ChlzD2</label>
    </ligand>
    <ligandPart>
        <name>Mg</name>
        <dbReference type="ChEBI" id="CHEBI:25107"/>
    </ligandPart>
</feature>
<feature type="binding site" evidence="1">
    <location>
        <position position="129"/>
    </location>
    <ligand>
        <name>pheophytin a</name>
        <dbReference type="ChEBI" id="CHEBI:136840"/>
        <label>D2</label>
    </ligand>
</feature>
<feature type="binding site" evidence="1">
    <location>
        <position position="142"/>
    </location>
    <ligand>
        <name>pheophytin a</name>
        <dbReference type="ChEBI" id="CHEBI:136840"/>
        <label>D2</label>
    </ligand>
</feature>
<feature type="binding site" description="axial binding residue" evidence="1">
    <location>
        <position position="197"/>
    </location>
    <ligand>
        <name>chlorophyll a</name>
        <dbReference type="ChEBI" id="CHEBI:58416"/>
        <label>PD2</label>
    </ligand>
    <ligandPart>
        <name>Mg</name>
        <dbReference type="ChEBI" id="CHEBI:25107"/>
    </ligandPart>
</feature>
<feature type="binding site" evidence="1">
    <location>
        <position position="214"/>
    </location>
    <ligand>
        <name>a plastoquinone</name>
        <dbReference type="ChEBI" id="CHEBI:17757"/>
        <label>Q(A)</label>
    </ligand>
</feature>
<feature type="binding site" evidence="1">
    <location>
        <position position="214"/>
    </location>
    <ligand>
        <name>Fe cation</name>
        <dbReference type="ChEBI" id="CHEBI:24875"/>
        <note>ligand shared with heterodimeric partner</note>
    </ligand>
</feature>
<feature type="binding site" evidence="1">
    <location>
        <position position="261"/>
    </location>
    <ligand>
        <name>a plastoquinone</name>
        <dbReference type="ChEBI" id="CHEBI:17757"/>
        <label>Q(A)</label>
    </ligand>
</feature>
<feature type="binding site" evidence="1">
    <location>
        <position position="268"/>
    </location>
    <ligand>
        <name>Fe cation</name>
        <dbReference type="ChEBI" id="CHEBI:24875"/>
        <note>ligand shared with heterodimeric partner</note>
    </ligand>
</feature>
<comment type="function">
    <text evidence="1">Photosystem II (PSII) is a light-driven water:plastoquinone oxidoreductase that uses light energy to abstract electrons from H(2)O, generating O(2) and a proton gradient subsequently used for ATP formation. It consists of a core antenna complex that captures photons, and an electron transfer chain that converts photonic excitation into a charge separation. The D1/D2 (PsbA/PsbD) reaction center heterodimer binds P680, the primary electron donor of PSII as well as several subsequent electron acceptors. D2 is needed for assembly of a stable PSII complex.</text>
</comment>
<comment type="catalytic activity">
    <reaction evidence="1">
        <text>2 a plastoquinone + 4 hnu + 2 H2O = 2 a plastoquinol + O2</text>
        <dbReference type="Rhea" id="RHEA:36359"/>
        <dbReference type="Rhea" id="RHEA-COMP:9561"/>
        <dbReference type="Rhea" id="RHEA-COMP:9562"/>
        <dbReference type="ChEBI" id="CHEBI:15377"/>
        <dbReference type="ChEBI" id="CHEBI:15379"/>
        <dbReference type="ChEBI" id="CHEBI:17757"/>
        <dbReference type="ChEBI" id="CHEBI:30212"/>
        <dbReference type="ChEBI" id="CHEBI:62192"/>
        <dbReference type="EC" id="1.10.3.9"/>
    </reaction>
</comment>
<comment type="cofactor">
    <text evidence="1">The D1/D2 heterodimer binds P680, chlorophylls that are the primary electron donor of PSII, and subsequent electron acceptors. It shares a non-heme iron and each subunit binds pheophytin, quinone, additional chlorophylls, carotenoids and lipids. There is also a Cl(-1) ion associated with D1 and D2, which is required for oxygen evolution. The PSII complex binds additional chlorophylls, carotenoids and specific lipids.</text>
</comment>
<comment type="subunit">
    <text evidence="1">PSII is composed of 1 copy each of membrane proteins PsbA, PsbB, PsbC, PsbD, PsbE, PsbF, PsbH, PsbI, PsbJ, PsbK, PsbL, PsbM, PsbT, PsbX, PsbY, PsbZ, Psb30/Ycf12, at least 3 peripheral proteins of the oxygen-evolving complex and a large number of cofactors. It forms dimeric complexes.</text>
</comment>
<comment type="subcellular location">
    <subcellularLocation>
        <location evidence="1">Plastid</location>
        <location evidence="1">Cyanelle thylakoid membrane</location>
        <topology evidence="1">Multi-pass membrane protein</topology>
    </subcellularLocation>
</comment>
<comment type="miscellaneous">
    <text evidence="1">2 of the reaction center chlorophylls (ChlD1 and ChlD2) are entirely coordinated by water.</text>
</comment>
<comment type="similarity">
    <text evidence="1">Belongs to the reaction center PufL/M/PsbA/D family.</text>
</comment>
<evidence type="ECO:0000255" key="1">
    <source>
        <dbReference type="HAMAP-Rule" id="MF_01383"/>
    </source>
</evidence>
<name>PSBD_CYAPA</name>
<keyword id="KW-0148">Chlorophyll</keyword>
<keyword id="KW-0157">Chromophore</keyword>
<keyword id="KW-0194">Cyanelle</keyword>
<keyword id="KW-0249">Electron transport</keyword>
<keyword id="KW-0408">Iron</keyword>
<keyword id="KW-0460">Magnesium</keyword>
<keyword id="KW-0472">Membrane</keyword>
<keyword id="KW-0479">Metal-binding</keyword>
<keyword id="KW-0560">Oxidoreductase</keyword>
<keyword id="KW-0602">Photosynthesis</keyword>
<keyword id="KW-0604">Photosystem II</keyword>
<keyword id="KW-0934">Plastid</keyword>
<keyword id="KW-0793">Thylakoid</keyword>
<keyword id="KW-0812">Transmembrane</keyword>
<keyword id="KW-1133">Transmembrane helix</keyword>
<keyword id="KW-0813">Transport</keyword>
<dbReference type="EC" id="1.10.3.9" evidence="1"/>
<dbReference type="EMBL" id="U30821">
    <property type="protein sequence ID" value="AAA81278.1"/>
    <property type="molecule type" value="Genomic_DNA"/>
</dbReference>
<dbReference type="PIR" id="T06935">
    <property type="entry name" value="T06935"/>
</dbReference>
<dbReference type="RefSeq" id="NP_043247.1">
    <property type="nucleotide sequence ID" value="NC_001675.1"/>
</dbReference>
<dbReference type="SMR" id="P48079"/>
<dbReference type="GeneID" id="801506"/>
<dbReference type="GO" id="GO:0009535">
    <property type="term" value="C:chloroplast thylakoid membrane"/>
    <property type="evidence" value="ECO:0007669"/>
    <property type="project" value="TreeGrafter"/>
</dbReference>
<dbReference type="GO" id="GO:0033115">
    <property type="term" value="C:cyanelle thylakoid membrane"/>
    <property type="evidence" value="ECO:0007669"/>
    <property type="project" value="UniProtKB-SubCell"/>
</dbReference>
<dbReference type="GO" id="GO:0009523">
    <property type="term" value="C:photosystem II"/>
    <property type="evidence" value="ECO:0007669"/>
    <property type="project" value="UniProtKB-KW"/>
</dbReference>
<dbReference type="GO" id="GO:0016168">
    <property type="term" value="F:chlorophyll binding"/>
    <property type="evidence" value="ECO:0007669"/>
    <property type="project" value="UniProtKB-UniRule"/>
</dbReference>
<dbReference type="GO" id="GO:0045156">
    <property type="term" value="F:electron transporter, transferring electrons within the cyclic electron transport pathway of photosynthesis activity"/>
    <property type="evidence" value="ECO:0007669"/>
    <property type="project" value="InterPro"/>
</dbReference>
<dbReference type="GO" id="GO:0005506">
    <property type="term" value="F:iron ion binding"/>
    <property type="evidence" value="ECO:0007669"/>
    <property type="project" value="UniProtKB-UniRule"/>
</dbReference>
<dbReference type="GO" id="GO:0016491">
    <property type="term" value="F:oxidoreductase activity"/>
    <property type="evidence" value="ECO:0007669"/>
    <property type="project" value="UniProtKB-KW"/>
</dbReference>
<dbReference type="GO" id="GO:0009772">
    <property type="term" value="P:photosynthetic electron transport in photosystem II"/>
    <property type="evidence" value="ECO:0007669"/>
    <property type="project" value="InterPro"/>
</dbReference>
<dbReference type="FunFam" id="1.20.85.10:FF:000001">
    <property type="entry name" value="photosystem II D2 protein-like"/>
    <property type="match status" value="1"/>
</dbReference>
<dbReference type="Gene3D" id="1.20.85.10">
    <property type="entry name" value="Photosystem II protein D1-like"/>
    <property type="match status" value="1"/>
</dbReference>
<dbReference type="HAMAP" id="MF_01383">
    <property type="entry name" value="PSII_PsbD_D2"/>
    <property type="match status" value="1"/>
</dbReference>
<dbReference type="InterPro" id="IPR055266">
    <property type="entry name" value="D1/D2"/>
</dbReference>
<dbReference type="InterPro" id="IPR036854">
    <property type="entry name" value="Photo_II_D1/D2_sf"/>
</dbReference>
<dbReference type="InterPro" id="IPR000484">
    <property type="entry name" value="Photo_RC_L/M"/>
</dbReference>
<dbReference type="InterPro" id="IPR055265">
    <property type="entry name" value="Photo_RC_L/M_CS"/>
</dbReference>
<dbReference type="InterPro" id="IPR005868">
    <property type="entry name" value="PSII_PsbD/D2"/>
</dbReference>
<dbReference type="NCBIfam" id="TIGR01152">
    <property type="entry name" value="psbD"/>
    <property type="match status" value="1"/>
</dbReference>
<dbReference type="PANTHER" id="PTHR33149:SF12">
    <property type="entry name" value="PHOTOSYSTEM II D2 PROTEIN"/>
    <property type="match status" value="1"/>
</dbReference>
<dbReference type="PANTHER" id="PTHR33149">
    <property type="entry name" value="PHOTOSYSTEM II PROTEIN D1"/>
    <property type="match status" value="1"/>
</dbReference>
<dbReference type="Pfam" id="PF00124">
    <property type="entry name" value="Photo_RC"/>
    <property type="match status" value="1"/>
</dbReference>
<dbReference type="PRINTS" id="PR00256">
    <property type="entry name" value="REACTNCENTRE"/>
</dbReference>
<dbReference type="SUPFAM" id="SSF81483">
    <property type="entry name" value="Bacterial photosystem II reaction centre, L and M subunits"/>
    <property type="match status" value="1"/>
</dbReference>
<dbReference type="PROSITE" id="PS00244">
    <property type="entry name" value="REACTION_CENTER"/>
    <property type="match status" value="1"/>
</dbReference>
<organism>
    <name type="scientific">Cyanophora paradoxa</name>
    <dbReference type="NCBI Taxonomy" id="2762"/>
    <lineage>
        <taxon>Eukaryota</taxon>
        <taxon>Glaucocystophyceae</taxon>
        <taxon>Cyanophoraceae</taxon>
        <taxon>Cyanophora</taxon>
    </lineage>
</organism>
<protein>
    <recommendedName>
        <fullName evidence="1">Photosystem II D2 protein</fullName>
        <shortName evidence="1">PSII D2 protein</shortName>
        <ecNumber evidence="1">1.10.3.9</ecNumber>
    </recommendedName>
    <alternativeName>
        <fullName evidence="1">Photosystem Q(A) protein</fullName>
    </alternativeName>
</protein>
<reference key="1">
    <citation type="journal article" date="1995" name="Plant Mol. Biol. Rep.">
        <title>Nucleotide sequence of the cyanelle DNA from Cyanophora paradoxa.</title>
        <authorList>
            <person name="Stirewalt V.L."/>
            <person name="Michalowski C.B."/>
            <person name="Loeffelhardt W."/>
            <person name="Bohnert H.J."/>
            <person name="Bryant D.A."/>
        </authorList>
    </citation>
    <scope>NUCLEOTIDE SEQUENCE [LARGE SCALE GENOMIC DNA]</scope>
    <source>
        <strain>UTEX LB 555 / Pringsheim</strain>
    </source>
</reference>
<reference key="2">
    <citation type="book" date="1997" name="Eukaryotism and symbiosis">
        <title>The complete sequence of the cyanelle genome of Cyanophora paradoxa: the genetic complexity of a primitive plastid.</title>
        <editorList>
            <person name="Schenk H.E.A."/>
            <person name="Herrmann R."/>
            <person name="Jeon K.W."/>
            <person name="Mueller N.E."/>
            <person name="Schwemmler W."/>
        </editorList>
        <authorList>
            <person name="Loeffelhardt W."/>
            <person name="Stirewalt V.L."/>
            <person name="Michalowski C.B."/>
            <person name="Annarella M."/>
            <person name="Farley J.Y."/>
            <person name="Schluchter W.M."/>
            <person name="Chung S."/>
            <person name="Newmann-Spallart C."/>
            <person name="Steiner J.M."/>
            <person name="Jakowitsch J."/>
            <person name="Bohnert H.J."/>
            <person name="Bryant D.A."/>
        </authorList>
    </citation>
    <scope>NUCLEOTIDE SEQUENCE [LARGE SCALE GENOMIC DNA]</scope>
    <source>
        <strain>UTEX LB 555 / Pringsheim</strain>
    </source>
</reference>
<proteinExistence type="inferred from homology"/>
<accession>P48079</accession>
<gene>
    <name evidence="1" type="primary">psbD</name>
</gene>